<dbReference type="EMBL" id="AY926411">
    <property type="protein sequence ID" value="AAY23254.1"/>
    <property type="molecule type" value="Genomic_DNA"/>
</dbReference>
<dbReference type="GO" id="GO:0005743">
    <property type="term" value="C:mitochondrial inner membrane"/>
    <property type="evidence" value="ECO:0007669"/>
    <property type="project" value="UniProtKB-SubCell"/>
</dbReference>
<dbReference type="GO" id="GO:0045275">
    <property type="term" value="C:respiratory chain complex III"/>
    <property type="evidence" value="ECO:0007669"/>
    <property type="project" value="InterPro"/>
</dbReference>
<dbReference type="GO" id="GO:0046872">
    <property type="term" value="F:metal ion binding"/>
    <property type="evidence" value="ECO:0007669"/>
    <property type="project" value="UniProtKB-KW"/>
</dbReference>
<dbReference type="GO" id="GO:0008121">
    <property type="term" value="F:ubiquinol-cytochrome-c reductase activity"/>
    <property type="evidence" value="ECO:0007669"/>
    <property type="project" value="InterPro"/>
</dbReference>
<dbReference type="GO" id="GO:0006122">
    <property type="term" value="P:mitochondrial electron transport, ubiquinol to cytochrome c"/>
    <property type="evidence" value="ECO:0007669"/>
    <property type="project" value="TreeGrafter"/>
</dbReference>
<dbReference type="CDD" id="cd00290">
    <property type="entry name" value="cytochrome_b_C"/>
    <property type="match status" value="1"/>
</dbReference>
<dbReference type="CDD" id="cd00284">
    <property type="entry name" value="Cytochrome_b_N"/>
    <property type="match status" value="1"/>
</dbReference>
<dbReference type="FunFam" id="1.20.810.10:FF:000002">
    <property type="entry name" value="Cytochrome b"/>
    <property type="match status" value="1"/>
</dbReference>
<dbReference type="Gene3D" id="1.20.810.10">
    <property type="entry name" value="Cytochrome Bc1 Complex, Chain C"/>
    <property type="match status" value="1"/>
</dbReference>
<dbReference type="InterPro" id="IPR005798">
    <property type="entry name" value="Cyt_b/b6_C"/>
</dbReference>
<dbReference type="InterPro" id="IPR036150">
    <property type="entry name" value="Cyt_b/b6_C_sf"/>
</dbReference>
<dbReference type="InterPro" id="IPR005797">
    <property type="entry name" value="Cyt_b/b6_N"/>
</dbReference>
<dbReference type="InterPro" id="IPR027387">
    <property type="entry name" value="Cytb/b6-like_sf"/>
</dbReference>
<dbReference type="InterPro" id="IPR030689">
    <property type="entry name" value="Cytochrome_b"/>
</dbReference>
<dbReference type="InterPro" id="IPR048260">
    <property type="entry name" value="Cytochrome_b_C_euk/bac"/>
</dbReference>
<dbReference type="InterPro" id="IPR048259">
    <property type="entry name" value="Cytochrome_b_N_euk/bac"/>
</dbReference>
<dbReference type="InterPro" id="IPR016174">
    <property type="entry name" value="Di-haem_cyt_TM"/>
</dbReference>
<dbReference type="PANTHER" id="PTHR19271">
    <property type="entry name" value="CYTOCHROME B"/>
    <property type="match status" value="1"/>
</dbReference>
<dbReference type="PANTHER" id="PTHR19271:SF16">
    <property type="entry name" value="CYTOCHROME B"/>
    <property type="match status" value="1"/>
</dbReference>
<dbReference type="Pfam" id="PF00032">
    <property type="entry name" value="Cytochrom_B_C"/>
    <property type="match status" value="1"/>
</dbReference>
<dbReference type="Pfam" id="PF00033">
    <property type="entry name" value="Cytochrome_B"/>
    <property type="match status" value="1"/>
</dbReference>
<dbReference type="PIRSF" id="PIRSF038885">
    <property type="entry name" value="COB"/>
    <property type="match status" value="1"/>
</dbReference>
<dbReference type="SUPFAM" id="SSF81648">
    <property type="entry name" value="a domain/subunit of cytochrome bc1 complex (Ubiquinol-cytochrome c reductase)"/>
    <property type="match status" value="1"/>
</dbReference>
<dbReference type="SUPFAM" id="SSF81342">
    <property type="entry name" value="Transmembrane di-heme cytochromes"/>
    <property type="match status" value="1"/>
</dbReference>
<dbReference type="PROSITE" id="PS51003">
    <property type="entry name" value="CYTB_CTER"/>
    <property type="match status" value="1"/>
</dbReference>
<dbReference type="PROSITE" id="PS51002">
    <property type="entry name" value="CYTB_NTER"/>
    <property type="match status" value="1"/>
</dbReference>
<protein>
    <recommendedName>
        <fullName>Cytochrome b</fullName>
    </recommendedName>
    <alternativeName>
        <fullName>Complex III subunit 3</fullName>
    </alternativeName>
    <alternativeName>
        <fullName>Complex III subunit III</fullName>
    </alternativeName>
    <alternativeName>
        <fullName>Cytochrome b-c1 complex subunit 3</fullName>
    </alternativeName>
    <alternativeName>
        <fullName>Ubiquinol-cytochrome-c reductase complex cytochrome b subunit</fullName>
    </alternativeName>
</protein>
<evidence type="ECO:0000250" key="1"/>
<evidence type="ECO:0000250" key="2">
    <source>
        <dbReference type="UniProtKB" id="P00157"/>
    </source>
</evidence>
<evidence type="ECO:0000255" key="3">
    <source>
        <dbReference type="PROSITE-ProRule" id="PRU00967"/>
    </source>
</evidence>
<evidence type="ECO:0000255" key="4">
    <source>
        <dbReference type="PROSITE-ProRule" id="PRU00968"/>
    </source>
</evidence>
<geneLocation type="mitochondrion"/>
<accession>Q508J2</accession>
<name>CYB_PERFE</name>
<keyword id="KW-0249">Electron transport</keyword>
<keyword id="KW-0349">Heme</keyword>
<keyword id="KW-0408">Iron</keyword>
<keyword id="KW-0472">Membrane</keyword>
<keyword id="KW-0479">Metal-binding</keyword>
<keyword id="KW-0496">Mitochondrion</keyword>
<keyword id="KW-0999">Mitochondrion inner membrane</keyword>
<keyword id="KW-0679">Respiratory chain</keyword>
<keyword id="KW-0812">Transmembrane</keyword>
<keyword id="KW-1133">Transmembrane helix</keyword>
<keyword id="KW-0813">Transport</keyword>
<keyword id="KW-0830">Ubiquinone</keyword>
<organism>
    <name type="scientific">Perognathus flavescens</name>
    <name type="common">Plains pocket mouse</name>
    <dbReference type="NCBI Taxonomy" id="38675"/>
    <lineage>
        <taxon>Eukaryota</taxon>
        <taxon>Metazoa</taxon>
        <taxon>Chordata</taxon>
        <taxon>Craniata</taxon>
        <taxon>Vertebrata</taxon>
        <taxon>Euteleostomi</taxon>
        <taxon>Mammalia</taxon>
        <taxon>Eutheria</taxon>
        <taxon>Euarchontoglires</taxon>
        <taxon>Glires</taxon>
        <taxon>Rodentia</taxon>
        <taxon>Castorimorpha</taxon>
        <taxon>Heteromyidae</taxon>
        <taxon>Perognathinae</taxon>
        <taxon>Perognathus</taxon>
    </lineage>
</organism>
<sequence length="379" mass="42828">MTIIRKSHPLMKLINHAFIDLPAPSNISGWWNFGSLLGVCLIIQISTGLFLSMHYTSDTLTAFSSVSHICRDVNYGWLIRYMHANGASLFFICLYFHIGRGIYYGSYLYKETWNIGIILLLMGMATGFMGYVLPWGQMSFWGATVITNLLSAIPYIGSEMVEWIWGGFSVDKATLTRFFAFHFILPFIIAEMAMVHLLFLHETGSNNPLGIMSDSDKIPFHSYYSLKDLLRVVALLAFYLTIGFFFPDALGDPDNNTSANPLNTPPHIKLEWYSLLAYAILRSIPNKLGXVIXLVFSILVLALFPLLHTSNQRGXMFRPISQTLFWLLISDLIILTWIGGQPVEPPFIIIGQLASIFYFSNILILLPVAGLIENKLLKW</sequence>
<feature type="chain" id="PRO_0000255111" description="Cytochrome b">
    <location>
        <begin position="1"/>
        <end position="379"/>
    </location>
</feature>
<feature type="transmembrane region" description="Helical" evidence="2">
    <location>
        <begin position="33"/>
        <end position="53"/>
    </location>
</feature>
<feature type="transmembrane region" description="Helical" evidence="2">
    <location>
        <begin position="77"/>
        <end position="98"/>
    </location>
</feature>
<feature type="transmembrane region" description="Helical" evidence="2">
    <location>
        <begin position="113"/>
        <end position="133"/>
    </location>
</feature>
<feature type="transmembrane region" description="Helical" evidence="2">
    <location>
        <begin position="178"/>
        <end position="198"/>
    </location>
</feature>
<feature type="transmembrane region" description="Helical" evidence="2">
    <location>
        <begin position="226"/>
        <end position="246"/>
    </location>
</feature>
<feature type="transmembrane region" description="Helical" evidence="2">
    <location>
        <begin position="288"/>
        <end position="308"/>
    </location>
</feature>
<feature type="transmembrane region" description="Helical" evidence="2">
    <location>
        <begin position="320"/>
        <end position="340"/>
    </location>
</feature>
<feature type="transmembrane region" description="Helical" evidence="2">
    <location>
        <begin position="347"/>
        <end position="367"/>
    </location>
</feature>
<feature type="binding site" description="axial binding residue" evidence="2">
    <location>
        <position position="83"/>
    </location>
    <ligand>
        <name>heme b</name>
        <dbReference type="ChEBI" id="CHEBI:60344"/>
        <label>b562</label>
    </ligand>
    <ligandPart>
        <name>Fe</name>
        <dbReference type="ChEBI" id="CHEBI:18248"/>
    </ligandPart>
</feature>
<feature type="binding site" description="axial binding residue" evidence="2">
    <location>
        <position position="97"/>
    </location>
    <ligand>
        <name>heme b</name>
        <dbReference type="ChEBI" id="CHEBI:60344"/>
        <label>b566</label>
    </ligand>
    <ligandPart>
        <name>Fe</name>
        <dbReference type="ChEBI" id="CHEBI:18248"/>
    </ligandPart>
</feature>
<feature type="binding site" description="axial binding residue" evidence="2">
    <location>
        <position position="182"/>
    </location>
    <ligand>
        <name>heme b</name>
        <dbReference type="ChEBI" id="CHEBI:60344"/>
        <label>b562</label>
    </ligand>
    <ligandPart>
        <name>Fe</name>
        <dbReference type="ChEBI" id="CHEBI:18248"/>
    </ligandPart>
</feature>
<feature type="binding site" description="axial binding residue" evidence="2">
    <location>
        <position position="196"/>
    </location>
    <ligand>
        <name>heme b</name>
        <dbReference type="ChEBI" id="CHEBI:60344"/>
        <label>b566</label>
    </ligand>
    <ligandPart>
        <name>Fe</name>
        <dbReference type="ChEBI" id="CHEBI:18248"/>
    </ligandPart>
</feature>
<feature type="binding site" evidence="2">
    <location>
        <position position="201"/>
    </location>
    <ligand>
        <name>a ubiquinone</name>
        <dbReference type="ChEBI" id="CHEBI:16389"/>
    </ligand>
</feature>
<gene>
    <name type="primary">MT-CYB</name>
    <name type="synonym">COB</name>
    <name type="synonym">CYTB</name>
    <name type="synonym">MTCYB</name>
</gene>
<reference key="1">
    <citation type="journal article" date="2005" name="J. Mammal.">
        <title>Phylogenetics of the new world rodent family Heteromyidae.</title>
        <authorList>
            <person name="Alexander L.F."/>
            <person name="Riddle B.R."/>
        </authorList>
    </citation>
    <scope>NUCLEOTIDE SEQUENCE [GENOMIC DNA]</scope>
    <source>
        <strain>Isolate LVT 2527</strain>
    </source>
</reference>
<comment type="function">
    <text evidence="2">Component of the ubiquinol-cytochrome c reductase complex (complex III or cytochrome b-c1 complex) that is part of the mitochondrial respiratory chain. The b-c1 complex mediates electron transfer from ubiquinol to cytochrome c. Contributes to the generation of a proton gradient across the mitochondrial membrane that is then used for ATP synthesis.</text>
</comment>
<comment type="cofactor">
    <cofactor evidence="2">
        <name>heme b</name>
        <dbReference type="ChEBI" id="CHEBI:60344"/>
    </cofactor>
    <text evidence="2">Binds 2 heme b groups non-covalently.</text>
</comment>
<comment type="subunit">
    <text evidence="2">The cytochrome bc1 complex contains 11 subunits: 3 respiratory subunits (MT-CYB, CYC1 and UQCRFS1), 2 core proteins (UQCRC1 and UQCRC2) and 6 low-molecular weight proteins (UQCRH/QCR6, UQCRB/QCR7, UQCRQ/QCR8, UQCR10/QCR9, UQCR11/QCR10 and a cleavage product of UQCRFS1). This cytochrome bc1 complex then forms a dimer.</text>
</comment>
<comment type="subcellular location">
    <subcellularLocation>
        <location evidence="2">Mitochondrion inner membrane</location>
        <topology evidence="2">Multi-pass membrane protein</topology>
    </subcellularLocation>
</comment>
<comment type="miscellaneous">
    <text evidence="1">Heme 1 (or BL or b562) is low-potential and absorbs at about 562 nm, and heme 2 (or BH or b566) is high-potential and absorbs at about 566 nm.</text>
</comment>
<comment type="similarity">
    <text evidence="3 4">Belongs to the cytochrome b family.</text>
</comment>
<comment type="caution">
    <text evidence="2">The full-length protein contains only eight transmembrane helices, not nine as predicted by bioinformatics tools.</text>
</comment>
<proteinExistence type="inferred from homology"/>